<name>PP65_HCMVA</name>
<organism>
    <name type="scientific">Human cytomegalovirus (strain AD169)</name>
    <name type="common">HHV-5</name>
    <name type="synonym">Human herpesvirus 5</name>
    <dbReference type="NCBI Taxonomy" id="10360"/>
    <lineage>
        <taxon>Viruses</taxon>
        <taxon>Duplodnaviria</taxon>
        <taxon>Heunggongvirae</taxon>
        <taxon>Peploviricota</taxon>
        <taxon>Herviviricetes</taxon>
        <taxon>Herpesvirales</taxon>
        <taxon>Orthoherpesviridae</taxon>
        <taxon>Betaherpesvirinae</taxon>
        <taxon>Cytomegalovirus</taxon>
        <taxon>Cytomegalovirus humanbeta5</taxon>
        <taxon>Human cytomegalovirus</taxon>
    </lineage>
</organism>
<comment type="function">
    <text evidence="3 5 7">Counteracts the host antiviral immune response when activated and phosphorylated, by preventing host IRF3 from entering the nucleus (PubMed:15452220). Also inhibits the type I interferon production by inactivating the enzymatic activity of DNA sensor CGAS without affecting STING1 (PubMed:29263269). Participates in the transactivation of viral major immediate-early genes by the recruitment of host IFI16 to the promoters pf these genes (PubMed:20504932).</text>
</comment>
<comment type="subunit">
    <text evidence="5 6 7">Interacts with host NCL/nucleolin (PubMed:21053310). Interacts with host IFI16 (PubMed:20504932). Interacts with host CGAS; this interaction inhibits CGAS enzymatic activity (PubMed:29263269).</text>
</comment>
<comment type="interaction">
    <interactant intactId="EBI-9545359">
        <id>P06725</id>
    </interactant>
    <interactant intactId="EBI-1180783">
        <id>O96017</id>
        <label>CHEK2</label>
    </interactant>
    <organismsDiffer>true</organismsDiffer>
    <experiments>2</experiments>
</comment>
<comment type="subcellular location">
    <subcellularLocation>
        <location evidence="9">Virion tegument</location>
    </subcellularLocation>
    <subcellularLocation>
        <location evidence="4 7 8">Host nucleus</location>
    </subcellularLocation>
    <subcellularLocation>
        <location evidence="4">Host cytoplasm</location>
    </subcellularLocation>
    <text>As part of the incoming virion, pp65 is targeted to the nucleus immediately after infection (PubMed:7815485). The newly synthesized pp65 is observed in the nucleus until some time after 48 hours postinfection (PubMed:17715235). Thereafter, pp65 is probably exported and accumulates in the cytoplasm (PubMed:17715235). Also found in dense bodies (PubMed:7815485).</text>
</comment>
<comment type="PTM">
    <text>Phosphorylation may play a role in the localization of the protein.</text>
</comment>
<comment type="similarity">
    <text evidence="9">Belongs to the herpesviridae pp65 family.</text>
</comment>
<sequence length="561" mass="62898">MESRGRRCPEMISVLGPISGHVLKAVFSRGDTPVLPHETRLLQTGIHVRVSQPSLILVSQYTPDSTPCHRGDNQLQVQHTYFTGSEVENVSVNVHNPTGRSICPSQEPMSIYVYALPLKMLNIPSINVHHYPSAAERKHRHLPVADAVIHASGKQMWQARLTVSGLAWTRQQNQWKEPDVYYTSAFVFPTKDVALRHVVCAHELVCSMENTRATKMQVIGDQYVKVYLESFCEDVPSGKLFMHVTLGSDVEEDLTMTRNPQPFMRPHERNGFTVLCPKNMIIKPGKISHIMLDVAFTSHEHFGLLCPKSIPGLSISGNLLMNGQQIFLEVQAIRETVELRQYDPVAALFFFDIDLLLQRGPQYSEHPTFTSQYRIQGKLEYRHTWDRHDEGAAQGDDDVWTSGSDSDEELVTTERKTPRVTGGGAMAGASTSAGRKRKSASSATACTSGVMTRGRLKAESTVAPEEDTDEDSDNEIHNPAVFTWPPWQAGILARNLVPMVATVQGQNLKYQEFFWDANDIYRIFAELEGVWQPAAQPKRRRHRQDALPGPCIASTPKKHRG</sequence>
<protein>
    <recommendedName>
        <fullName>65 kDa phosphoprotein</fullName>
        <shortName>pp65</shortName>
    </recommendedName>
    <alternativeName>
        <fullName>65 kDa matrix phosphoprotein</fullName>
    </alternativeName>
    <alternativeName>
        <fullName>Phosphoprotein UL83</fullName>
    </alternativeName>
    <alternativeName>
        <fullName>Tegument protein UL83</fullName>
    </alternativeName>
</protein>
<reference key="1">
    <citation type="journal article" date="1987" name="J. Virol.">
        <title>Primary structure and transcription of the genes coding for the two virion phosphoproteins pp65 and pp71 of human cytomegalovirus.</title>
        <authorList>
            <person name="Rueger B."/>
            <person name="Klages S."/>
            <person name="Walla B."/>
            <person name="Albrecht J.-C."/>
            <person name="Fleckenstein B."/>
            <person name="Tomlinson P."/>
            <person name="Barrell B.G."/>
        </authorList>
    </citation>
    <scope>NUCLEOTIDE SEQUENCE [GENOMIC DNA]</scope>
</reference>
<reference key="2">
    <citation type="journal article" date="1990" name="Curr. Top. Microbiol. Immunol.">
        <title>Analysis of the protein-coding content of the sequence of human cytomegalovirus strain AD169.</title>
        <authorList>
            <person name="Chee M.S."/>
            <person name="Bankier A.T."/>
            <person name="Beck S."/>
            <person name="Bohni R."/>
            <person name="Brown C.M."/>
            <person name="Cerny R."/>
            <person name="Horsnell T."/>
            <person name="Hutchison C.A. III"/>
            <person name="Kouzarides T."/>
            <person name="Martignetti J.A."/>
            <person name="Preddie E."/>
            <person name="Satchwell S.C."/>
            <person name="Tomlinson P."/>
            <person name="Weston K.M."/>
            <person name="Barrell B.G."/>
        </authorList>
    </citation>
    <scope>NUCLEOTIDE SEQUENCE [LARGE SCALE GENOMIC DNA]</scope>
</reference>
<reference key="3">
    <citation type="journal article" date="1984" name="Proc. Natl. Acad. Sci. U.S.A.">
        <title>Cloning and physical mapping of a gene fragment coding for a 64-kilodalton major late antigen of human cytomegalovirus.</title>
        <authorList>
            <person name="Pande H."/>
            <person name="Baak S.W."/>
            <person name="Riggs A.D."/>
            <person name="Clark B.R."/>
            <person name="Shively J.E."/>
            <person name="Zaia J.A."/>
        </authorList>
    </citation>
    <scope>NUCLEOTIDE SEQUENCE [GENOMIC DNA] OF 495-538</scope>
</reference>
<reference key="4">
    <citation type="journal article" date="2003" name="J. Gen. Virol.">
        <title>The human cytomegalovirus genome revisited: comparison with the chimpanzee cytomegalovirus genome.</title>
        <authorList>
            <person name="Davison A.J."/>
            <person name="Dolan A."/>
            <person name="Akter P."/>
            <person name="Addison C."/>
            <person name="Dargan D.J."/>
            <person name="Alcendor D.J."/>
            <person name="McGeoch D.J."/>
            <person name="Hayward G.S."/>
        </authorList>
    </citation>
    <scope>GENOME REANNOTATION</scope>
</reference>
<reference key="5">
    <citation type="journal article" date="2003" name="J. Gen. Virol.">
        <authorList>
            <person name="Davison A.J."/>
            <person name="Dolan A."/>
            <person name="Akter P."/>
            <person name="Addison C."/>
            <person name="Dargan D.J."/>
            <person name="Alcendor D.J."/>
            <person name="McGeoch D.J."/>
            <person name="Hayward G.S."/>
        </authorList>
    </citation>
    <scope>ERRATUM OF PUBMED:12533697</scope>
</reference>
<reference key="6">
    <citation type="journal article" date="1995" name="J. Virol.">
        <title>Nuclear targeting of the tegument protein pp65 (UL83) of human cytomegalovirus: an unusual bipartite nuclear localization signal functions with other portions of the protein to mediate its efficient nuclear transport.</title>
        <authorList>
            <person name="Schmolke S."/>
            <person name="Drescher P."/>
            <person name="Jahn G."/>
            <person name="Plachter B."/>
        </authorList>
    </citation>
    <scope>SUBCELLULAR LOCATION</scope>
</reference>
<reference key="7">
    <citation type="journal article" date="2004" name="J. Virol.">
        <title>Identification of proteins in human cytomegalovirus (HCMV) particles: the HCMV proteome.</title>
        <authorList>
            <person name="Varnum S.M."/>
            <person name="Streblow D.N."/>
            <person name="Monroe M.E."/>
            <person name="Smith P."/>
            <person name="Auberry K.J."/>
            <person name="Pasa-Tolic L."/>
            <person name="Wang D."/>
            <person name="Camp D.G. II"/>
            <person name="Rodland K."/>
            <person name="Wiley S."/>
            <person name="Britt W."/>
            <person name="Shenk T."/>
            <person name="Smith R.D."/>
            <person name="Nelson J.A."/>
        </authorList>
    </citation>
    <scope>IDENTIFICATION</scope>
</reference>
<reference key="8">
    <citation type="journal article" date="2004" name="J. Virol.">
        <authorList>
            <person name="Varnum S.M."/>
            <person name="Streblow D.N."/>
            <person name="Monroe M.E."/>
            <person name="Smith P."/>
            <person name="Auberry K.J."/>
            <person name="Pasa-Tolic L."/>
            <person name="Wang D."/>
            <person name="Camp D.G. II"/>
            <person name="Rodland K."/>
            <person name="Wiley S."/>
            <person name="Britt W."/>
            <person name="Shenk T."/>
            <person name="Smith R.D."/>
            <person name="Nelson J.A."/>
        </authorList>
    </citation>
    <scope>ERRATUM OF PUBMED:15452216</scope>
</reference>
<reference key="9">
    <citation type="journal article" date="2004" name="J. Virol.">
        <title>Major human cytomegalovirus structural protein pp65 (ppUL83) prevents interferon response factor 3 activation in the interferon response.</title>
        <authorList>
            <person name="Abate D.A."/>
            <person name="Watanabe S."/>
            <person name="Mocarski E.S."/>
        </authorList>
    </citation>
    <scope>FUNCTION</scope>
</reference>
<reference key="10">
    <citation type="journal article" date="2007" name="J. Virol.">
        <title>Nuclear export of the human cytomegalovirus tegument protein pp65 requires cyclin-dependent kinase activity and the Crm1 exporter.</title>
        <authorList>
            <person name="Sanchez V."/>
            <person name="Mahr J.A."/>
            <person name="Orazio N.I."/>
            <person name="Spector D.H."/>
        </authorList>
    </citation>
    <scope>SUBCELLULAR LOCATION</scope>
</reference>
<reference key="11">
    <citation type="journal article" date="2010" name="J. Virol.">
        <title>Human cytomegalovirus pUL83 stimulates activity of the viral immediate-early promoter through its interaction with the cellular IFI16 protein.</title>
        <authorList>
            <person name="Cristea I.M."/>
            <person name="Moorman N.J."/>
            <person name="Terhune S.S."/>
            <person name="Cuevas C.D."/>
            <person name="O'Keefe E.S."/>
            <person name="Rout M.P."/>
            <person name="Chait B.T."/>
            <person name="Shenk T."/>
        </authorList>
    </citation>
    <scope>FUNCTION</scope>
    <scope>INTERACTION WITH HOST IFI16</scope>
</reference>
<reference key="12">
    <citation type="journal article" date="2011" name="J. Cell. Biochem.">
        <title>Cell-cycle-dependent localization of human cytomegalovirus UL83 phosphoprotein in the nucleolus and modulation of viral gene expression in human embryo fibroblasts in vitro.</title>
        <authorList>
            <person name="Arcangeletti M.C."/>
            <person name="Rodighiero I."/>
            <person name="Mirandola P."/>
            <person name="De Conto F."/>
            <person name="Covan S."/>
            <person name="Germini D."/>
            <person name="Razin S."/>
            <person name="Dettori G."/>
            <person name="Chezzi C."/>
        </authorList>
    </citation>
    <scope>INTERACTION WITH HOST NCL</scope>
</reference>
<reference key="13">
    <citation type="journal article" date="2018" name="J. Virol.">
        <title>Human Cytomegalovirus Tegument Protein pp65 (pUL83) Dampens Type I Interferon Production by Inactivating the DNA Sensor cGAS without Affecting STING.</title>
        <authorList>
            <person name="Biolatti M."/>
            <person name="Dell'Oste V."/>
            <person name="Pautasso S."/>
            <person name="Gugliesi F."/>
            <person name="von Einem J."/>
            <person name="Krapp C."/>
            <person name="Jakobsen M.R."/>
            <person name="Borgogna C."/>
            <person name="Gariglio M."/>
            <person name="De Andrea M."/>
            <person name="Landolfo S."/>
        </authorList>
    </citation>
    <scope>FUNCTION</scope>
    <scope>INTERACTION WITH HOST CGAS</scope>
    <scope>SUBCELLULAR LOCATION</scope>
</reference>
<reference key="14">
    <citation type="journal article" date="2009" name="J. Am. Chem. Soc.">
        <title>UV-induced ligand exchange in MHC class I protein crystals.</title>
        <authorList>
            <person name="Celie P.H."/>
            <person name="Toebes M."/>
            <person name="Rodenko B."/>
            <person name="Ovaa H."/>
            <person name="Perrakis A."/>
            <person name="Schumacher T.N."/>
        </authorList>
    </citation>
    <scope>X-RAY CRYSTALLOGRAPHY (2.3 ANGSTROMS) OF 495-503</scope>
</reference>
<proteinExistence type="evidence at protein level"/>
<accession>P06725</accession>
<accession>Q7M6K8</accession>
<dbReference type="EMBL" id="M15120">
    <property type="protein sequence ID" value="AAA45996.1"/>
    <property type="status" value="ALT_SEQ"/>
    <property type="molecule type" value="Genomic_DNA"/>
</dbReference>
<dbReference type="EMBL" id="X17403">
    <property type="protein sequence ID" value="CAA35357.1"/>
    <property type="molecule type" value="Genomic_DNA"/>
</dbReference>
<dbReference type="EMBL" id="K02531">
    <property type="protein sequence ID" value="AAA45983.1"/>
    <property type="molecule type" value="Genomic_DNA"/>
</dbReference>
<dbReference type="EMBL" id="BK000394">
    <property type="protein sequence ID" value="DAA00180.1"/>
    <property type="molecule type" value="Genomic_DNA"/>
</dbReference>
<dbReference type="PIR" id="A26793">
    <property type="entry name" value="WMBE65"/>
</dbReference>
<dbReference type="PDB" id="2X4R">
    <property type="method" value="X-ray"/>
    <property type="resolution" value="2.30 A"/>
    <property type="chains" value="C/F=495-503"/>
</dbReference>
<dbReference type="PDB" id="2X4T">
    <property type="method" value="X-ray"/>
    <property type="resolution" value="2.30 A"/>
    <property type="chains" value="C/F=495-503"/>
</dbReference>
<dbReference type="PDB" id="3GSO">
    <property type="method" value="X-ray"/>
    <property type="resolution" value="1.60 A"/>
    <property type="chains" value="P=495-503"/>
</dbReference>
<dbReference type="PDB" id="7T6I">
    <property type="method" value="X-ray"/>
    <property type="resolution" value="2.30 A"/>
    <property type="chains" value="C=142-158"/>
</dbReference>
<dbReference type="PDBsum" id="2X4R"/>
<dbReference type="PDBsum" id="2X4T"/>
<dbReference type="PDBsum" id="3GSO"/>
<dbReference type="PDBsum" id="7T6I"/>
<dbReference type="SMR" id="P06725"/>
<dbReference type="DIP" id="DIP-61111N"/>
<dbReference type="IntAct" id="P06725">
    <property type="interactions" value="4"/>
</dbReference>
<dbReference type="ABCD" id="P06725">
    <property type="antibodies" value="8 sequenced antibodies"/>
</dbReference>
<dbReference type="Reactome" id="R-HSA-198933">
    <property type="pathway name" value="Immunoregulatory interactions between a Lymphoid and a non-Lymphoid cell"/>
</dbReference>
<dbReference type="EvolutionaryTrace" id="P06725"/>
<dbReference type="Proteomes" id="UP000008991">
    <property type="component" value="Segment"/>
</dbReference>
<dbReference type="Proteomes" id="UP000008992">
    <property type="component" value="Segment"/>
</dbReference>
<dbReference type="GO" id="GO:0030430">
    <property type="term" value="C:host cell cytoplasm"/>
    <property type="evidence" value="ECO:0007669"/>
    <property type="project" value="UniProtKB-SubCell"/>
</dbReference>
<dbReference type="GO" id="GO:0042025">
    <property type="term" value="C:host cell nucleus"/>
    <property type="evidence" value="ECO:0007669"/>
    <property type="project" value="UniProtKB-SubCell"/>
</dbReference>
<dbReference type="GO" id="GO:0019033">
    <property type="term" value="C:viral tegument"/>
    <property type="evidence" value="ECO:0000304"/>
    <property type="project" value="Reactome"/>
</dbReference>
<dbReference type="GO" id="GO:0039548">
    <property type="term" value="P:symbiont-mediated suppression of host cytoplasmic pattern recognition receptor signaling pathway via inhibition of IRF3 activity"/>
    <property type="evidence" value="ECO:0007669"/>
    <property type="project" value="UniProtKB-KW"/>
</dbReference>
<dbReference type="InterPro" id="IPR036157">
    <property type="entry name" value="dUTPase-like_sf"/>
</dbReference>
<dbReference type="InterPro" id="IPR008649">
    <property type="entry name" value="Herpes_UL82/UL83"/>
</dbReference>
<dbReference type="Pfam" id="PF05784">
    <property type="entry name" value="Herpes_UL82_83"/>
    <property type="match status" value="1"/>
</dbReference>
<dbReference type="SUPFAM" id="SSF51283">
    <property type="entry name" value="dUTPase-like"/>
    <property type="match status" value="1"/>
</dbReference>
<feature type="chain" id="PRO_0000116292" description="65 kDa phosphoprotein">
    <location>
        <begin position="1"/>
        <end position="561"/>
    </location>
</feature>
<feature type="region of interest" description="Disordered" evidence="2">
    <location>
        <begin position="389"/>
        <end position="475"/>
    </location>
</feature>
<feature type="region of interest" description="Disordered" evidence="2">
    <location>
        <begin position="534"/>
        <end position="561"/>
    </location>
</feature>
<feature type="short sequence motif" description="Bipartite nuclear localization signal" evidence="9">
    <location>
        <begin position="537"/>
        <end position="560"/>
    </location>
</feature>
<feature type="compositionally biased region" description="Acidic residues" evidence="2">
    <location>
        <begin position="395"/>
        <end position="411"/>
    </location>
</feature>
<feature type="compositionally biased region" description="Low complexity" evidence="2">
    <location>
        <begin position="440"/>
        <end position="449"/>
    </location>
</feature>
<feature type="compositionally biased region" description="Acidic residues" evidence="2">
    <location>
        <begin position="464"/>
        <end position="473"/>
    </location>
</feature>
<feature type="modified residue" description="Phosphoserine" evidence="1">
    <location>
        <position position="472"/>
    </location>
</feature>
<feature type="sequence conflict" description="In Ref. 2; AAA45996." evidence="9" ref="2">
    <location>
        <begin position="94"/>
        <end position="106"/>
    </location>
</feature>
<keyword id="KW-0002">3D-structure</keyword>
<keyword id="KW-1035">Host cytoplasm</keyword>
<keyword id="KW-1048">Host nucleus</keyword>
<keyword id="KW-0945">Host-virus interaction</keyword>
<keyword id="KW-1090">Inhibition of host innate immune response by virus</keyword>
<keyword id="KW-1092">Inhibition of host IRF3 by virus</keyword>
<keyword id="KW-1113">Inhibition of host RLR pathway by virus</keyword>
<keyword id="KW-0597">Phosphoprotein</keyword>
<keyword id="KW-1185">Reference proteome</keyword>
<keyword id="KW-0899">Viral immunoevasion</keyword>
<keyword id="KW-0946">Virion</keyword>
<keyword id="KW-0920">Virion tegument</keyword>
<organismHost>
    <name type="scientific">Homo sapiens</name>
    <name type="common">Human</name>
    <dbReference type="NCBI Taxonomy" id="9606"/>
</organismHost>
<evidence type="ECO:0000250" key="1"/>
<evidence type="ECO:0000256" key="2">
    <source>
        <dbReference type="SAM" id="MobiDB-lite"/>
    </source>
</evidence>
<evidence type="ECO:0000269" key="3">
    <source>
    </source>
</evidence>
<evidence type="ECO:0000269" key="4">
    <source>
    </source>
</evidence>
<evidence type="ECO:0000269" key="5">
    <source>
    </source>
</evidence>
<evidence type="ECO:0000269" key="6">
    <source>
    </source>
</evidence>
<evidence type="ECO:0000269" key="7">
    <source>
    </source>
</evidence>
<evidence type="ECO:0000269" key="8">
    <source>
    </source>
</evidence>
<evidence type="ECO:0000305" key="9"/>
<gene>
    <name type="primary">UL83</name>
</gene>